<sequence>MAKGKDARVSVILECTSCVRKNVNKESRGISRYITQKNRRNTPSRLELRKFCPYCYKHTIHGEIKK</sequence>
<comment type="subcellular location">
    <subcellularLocation>
        <location>Plastid</location>
        <location>Chloroplast</location>
    </subcellularLocation>
</comment>
<comment type="similarity">
    <text evidence="1">Belongs to the bacterial ribosomal protein bL33 family.</text>
</comment>
<proteinExistence type="inferred from homology"/>
<keyword id="KW-0150">Chloroplast</keyword>
<keyword id="KW-0934">Plastid</keyword>
<keyword id="KW-0687">Ribonucleoprotein</keyword>
<keyword id="KW-0689">Ribosomal protein</keyword>
<protein>
    <recommendedName>
        <fullName evidence="1">Large ribosomal subunit protein bL33c</fullName>
    </recommendedName>
    <alternativeName>
        <fullName evidence="2">50S ribosomal protein L33, chloroplastic</fullName>
    </alternativeName>
</protein>
<feature type="chain" id="PRO_0000356803" description="Large ribosomal subunit protein bL33c">
    <location>
        <begin position="1"/>
        <end position="66"/>
    </location>
</feature>
<gene>
    <name evidence="1" type="primary">rpl33</name>
</gene>
<evidence type="ECO:0000255" key="1">
    <source>
        <dbReference type="HAMAP-Rule" id="MF_00294"/>
    </source>
</evidence>
<evidence type="ECO:0000305" key="2"/>
<accession>B2XWM6</accession>
<dbReference type="EMBL" id="EU254477">
    <property type="protein sequence ID" value="ABY79753.1"/>
    <property type="molecule type" value="Genomic_DNA"/>
</dbReference>
<dbReference type="RefSeq" id="YP_001936538.1">
    <property type="nucleotide sequence ID" value="NC_010776.1"/>
</dbReference>
<dbReference type="GeneID" id="6336026"/>
<dbReference type="GO" id="GO:0009507">
    <property type="term" value="C:chloroplast"/>
    <property type="evidence" value="ECO:0007669"/>
    <property type="project" value="UniProtKB-SubCell"/>
</dbReference>
<dbReference type="GO" id="GO:1990904">
    <property type="term" value="C:ribonucleoprotein complex"/>
    <property type="evidence" value="ECO:0007669"/>
    <property type="project" value="UniProtKB-KW"/>
</dbReference>
<dbReference type="GO" id="GO:0005840">
    <property type="term" value="C:ribosome"/>
    <property type="evidence" value="ECO:0007669"/>
    <property type="project" value="UniProtKB-KW"/>
</dbReference>
<dbReference type="GO" id="GO:0003735">
    <property type="term" value="F:structural constituent of ribosome"/>
    <property type="evidence" value="ECO:0007669"/>
    <property type="project" value="InterPro"/>
</dbReference>
<dbReference type="GO" id="GO:0006412">
    <property type="term" value="P:translation"/>
    <property type="evidence" value="ECO:0007669"/>
    <property type="project" value="UniProtKB-UniRule"/>
</dbReference>
<dbReference type="Gene3D" id="2.20.28.120">
    <property type="entry name" value="Ribosomal protein L33"/>
    <property type="match status" value="1"/>
</dbReference>
<dbReference type="HAMAP" id="MF_00294">
    <property type="entry name" value="Ribosomal_bL33"/>
    <property type="match status" value="1"/>
</dbReference>
<dbReference type="InterPro" id="IPR001705">
    <property type="entry name" value="Ribosomal_bL33"/>
</dbReference>
<dbReference type="InterPro" id="IPR018264">
    <property type="entry name" value="Ribosomal_bL33_CS"/>
</dbReference>
<dbReference type="InterPro" id="IPR038584">
    <property type="entry name" value="Ribosomal_bL33_sf"/>
</dbReference>
<dbReference type="InterPro" id="IPR011332">
    <property type="entry name" value="Ribosomal_zn-bd"/>
</dbReference>
<dbReference type="NCBIfam" id="NF001764">
    <property type="entry name" value="PRK00504.1"/>
    <property type="match status" value="1"/>
</dbReference>
<dbReference type="NCBIfam" id="NF001860">
    <property type="entry name" value="PRK00595.1"/>
    <property type="match status" value="1"/>
</dbReference>
<dbReference type="NCBIfam" id="TIGR01023">
    <property type="entry name" value="rpmG_bact"/>
    <property type="match status" value="1"/>
</dbReference>
<dbReference type="PANTHER" id="PTHR43168">
    <property type="entry name" value="50S RIBOSOMAL PROTEIN L33, CHLOROPLASTIC"/>
    <property type="match status" value="1"/>
</dbReference>
<dbReference type="PANTHER" id="PTHR43168:SF2">
    <property type="entry name" value="LARGE RIBOSOMAL SUBUNIT PROTEIN BL33C"/>
    <property type="match status" value="1"/>
</dbReference>
<dbReference type="Pfam" id="PF00471">
    <property type="entry name" value="Ribosomal_L33"/>
    <property type="match status" value="1"/>
</dbReference>
<dbReference type="SUPFAM" id="SSF57829">
    <property type="entry name" value="Zn-binding ribosomal proteins"/>
    <property type="match status" value="1"/>
</dbReference>
<dbReference type="PROSITE" id="PS00582">
    <property type="entry name" value="RIBOSOMAL_L33"/>
    <property type="match status" value="1"/>
</dbReference>
<reference key="1">
    <citation type="journal article" date="2008" name="BMC Plant Biol.">
        <title>Comparative chloroplast genomics and phylogenetics of Fagopyrum esculentum ssp. ancestrale - a wild ancestor of cultivated buckwheat.</title>
        <authorList>
            <person name="Logacheva M.D."/>
            <person name="Samigullin T.H."/>
            <person name="Dhingra A."/>
            <person name="Penin A.A."/>
        </authorList>
    </citation>
    <scope>NUCLEOTIDE SEQUENCE [LARGE SCALE GENOMIC DNA]</scope>
</reference>
<organism>
    <name type="scientific">Fagopyrum esculentum subsp. ancestrale</name>
    <name type="common">Wild buckwheat</name>
    <dbReference type="NCBI Taxonomy" id="180217"/>
    <lineage>
        <taxon>Eukaryota</taxon>
        <taxon>Viridiplantae</taxon>
        <taxon>Streptophyta</taxon>
        <taxon>Embryophyta</taxon>
        <taxon>Tracheophyta</taxon>
        <taxon>Spermatophyta</taxon>
        <taxon>Magnoliopsida</taxon>
        <taxon>eudicotyledons</taxon>
        <taxon>Gunneridae</taxon>
        <taxon>Pentapetalae</taxon>
        <taxon>Caryophyllales</taxon>
        <taxon>Polygonaceae</taxon>
        <taxon>Polygonoideae</taxon>
        <taxon>Fagopyreae</taxon>
        <taxon>Fagopyrum</taxon>
    </lineage>
</organism>
<geneLocation type="chloroplast"/>
<name>RK33_FAGEA</name>